<name>UVRC_ACTP7</name>
<gene>
    <name evidence="1" type="primary">uvrC</name>
    <name type="ordered locus">APP7_0279</name>
</gene>
<comment type="function">
    <text evidence="1">The UvrABC repair system catalyzes the recognition and processing of DNA lesions. UvrC both incises the 5' and 3' sides of the lesion. The N-terminal half is responsible for the 3' incision and the C-terminal half is responsible for the 5' incision.</text>
</comment>
<comment type="subunit">
    <text evidence="1">Interacts with UvrB in an incision complex.</text>
</comment>
<comment type="subcellular location">
    <subcellularLocation>
        <location evidence="1">Cytoplasm</location>
    </subcellularLocation>
</comment>
<comment type="similarity">
    <text evidence="1">Belongs to the UvrC family.</text>
</comment>
<evidence type="ECO:0000255" key="1">
    <source>
        <dbReference type="HAMAP-Rule" id="MF_00203"/>
    </source>
</evidence>
<accession>B3H0B9</accession>
<proteinExistence type="inferred from homology"/>
<reference key="1">
    <citation type="submission" date="2008-06" db="EMBL/GenBank/DDBJ databases">
        <title>Genome and proteome analysis of A. pleuropneumoniae serotype 7.</title>
        <authorList>
            <person name="Linke B."/>
            <person name="Buettner F."/>
            <person name="Martinez-Arias R."/>
            <person name="Goesmann A."/>
            <person name="Baltes N."/>
            <person name="Tegetmeyer H."/>
            <person name="Singh M."/>
            <person name="Gerlach G.F."/>
        </authorList>
    </citation>
    <scope>NUCLEOTIDE SEQUENCE [LARGE SCALE GENOMIC DNA]</scope>
    <source>
        <strain>AP76</strain>
    </source>
</reference>
<feature type="chain" id="PRO_1000099454" description="UvrABC system protein C">
    <location>
        <begin position="1"/>
        <end position="610"/>
    </location>
</feature>
<feature type="domain" description="GIY-YIG" evidence="1">
    <location>
        <begin position="13"/>
        <end position="91"/>
    </location>
</feature>
<feature type="domain" description="UVR" evidence="1">
    <location>
        <begin position="201"/>
        <end position="236"/>
    </location>
</feature>
<sequence length="610" mass="69106">MFDAKAFLADVPHLPGVYRMYDAKNTIIYVGKAKDLKKRLSSYFRSQLASKKTEALVANIHHIETTITHSETEALLLEHNYIKENQPKYNVLLRDDKSYPYILLTKHQHPRITSFRGSKKVAGEYFGPYPNAGAVRETLNLLQKLFPIRQCEDSYYKNRSRPCLQYQIGRCLAPCVEGYYSQAEYDNQVNLVRLFLQGKDGQVVEHLVQKMENAAQELDFEAAARFRDQIQSVRAVQEKQFVSNERLDDLDIISIAYQHGIACVHILFVRHGKVLGNRSYFPKVPNNTDLTELADTFVGQFYLQMNQHRTIPNQIIIDQPLSEATALANVLSEQAGHKVSIADKNIRGDKSRYLALAKTNAEAALTLQLKQDTHIRQRYDSLKALLNLAEIKRMECFDISHTMGNQTVASCVVFDENGPLKSDYRRFNIEGITGGDDYAAMEQALLKRYGRHLEEEKIPDIIFIDGGKGQLNRALETFASLNVSWDKRKPLLIGVAKGVERKAGLETLLISKWDKEIHLPPDSPALHLIQHIRDESHNHAITGHRKKRQKAFTESGLESIAGVGAKRRQALLKYLGGMQGVKSATLEEIQSVPGISKQLAEVIFDTLQHS</sequence>
<organism>
    <name type="scientific">Actinobacillus pleuropneumoniae serotype 7 (strain AP76)</name>
    <dbReference type="NCBI Taxonomy" id="537457"/>
    <lineage>
        <taxon>Bacteria</taxon>
        <taxon>Pseudomonadati</taxon>
        <taxon>Pseudomonadota</taxon>
        <taxon>Gammaproteobacteria</taxon>
        <taxon>Pasteurellales</taxon>
        <taxon>Pasteurellaceae</taxon>
        <taxon>Actinobacillus</taxon>
    </lineage>
</organism>
<keyword id="KW-0963">Cytoplasm</keyword>
<keyword id="KW-0227">DNA damage</keyword>
<keyword id="KW-0228">DNA excision</keyword>
<keyword id="KW-0234">DNA repair</keyword>
<keyword id="KW-0267">Excision nuclease</keyword>
<keyword id="KW-0742">SOS response</keyword>
<dbReference type="EMBL" id="CP001091">
    <property type="protein sequence ID" value="ACE60931.1"/>
    <property type="molecule type" value="Genomic_DNA"/>
</dbReference>
<dbReference type="RefSeq" id="WP_005606994.1">
    <property type="nucleotide sequence ID" value="NC_010939.1"/>
</dbReference>
<dbReference type="SMR" id="B3H0B9"/>
<dbReference type="KEGG" id="apa:APP7_0279"/>
<dbReference type="HOGENOM" id="CLU_014841_3_2_6"/>
<dbReference type="Proteomes" id="UP000001226">
    <property type="component" value="Chromosome"/>
</dbReference>
<dbReference type="GO" id="GO:0005737">
    <property type="term" value="C:cytoplasm"/>
    <property type="evidence" value="ECO:0007669"/>
    <property type="project" value="UniProtKB-SubCell"/>
</dbReference>
<dbReference type="GO" id="GO:0009380">
    <property type="term" value="C:excinuclease repair complex"/>
    <property type="evidence" value="ECO:0007669"/>
    <property type="project" value="InterPro"/>
</dbReference>
<dbReference type="GO" id="GO:0003677">
    <property type="term" value="F:DNA binding"/>
    <property type="evidence" value="ECO:0007669"/>
    <property type="project" value="UniProtKB-UniRule"/>
</dbReference>
<dbReference type="GO" id="GO:0009381">
    <property type="term" value="F:excinuclease ABC activity"/>
    <property type="evidence" value="ECO:0007669"/>
    <property type="project" value="UniProtKB-UniRule"/>
</dbReference>
<dbReference type="GO" id="GO:0006289">
    <property type="term" value="P:nucleotide-excision repair"/>
    <property type="evidence" value="ECO:0007669"/>
    <property type="project" value="UniProtKB-UniRule"/>
</dbReference>
<dbReference type="GO" id="GO:0009432">
    <property type="term" value="P:SOS response"/>
    <property type="evidence" value="ECO:0007669"/>
    <property type="project" value="UniProtKB-UniRule"/>
</dbReference>
<dbReference type="CDD" id="cd10434">
    <property type="entry name" value="GIY-YIG_UvrC_Cho"/>
    <property type="match status" value="1"/>
</dbReference>
<dbReference type="FunFam" id="1.10.150.20:FF:000005">
    <property type="entry name" value="UvrABC system protein C"/>
    <property type="match status" value="1"/>
</dbReference>
<dbReference type="FunFam" id="3.30.420.340:FF:000001">
    <property type="entry name" value="UvrABC system protein C"/>
    <property type="match status" value="1"/>
</dbReference>
<dbReference type="FunFam" id="3.40.1440.10:FF:000001">
    <property type="entry name" value="UvrABC system protein C"/>
    <property type="match status" value="1"/>
</dbReference>
<dbReference type="FunFam" id="4.10.860.10:FF:000002">
    <property type="entry name" value="UvrABC system protein C"/>
    <property type="match status" value="1"/>
</dbReference>
<dbReference type="Gene3D" id="1.10.150.20">
    <property type="entry name" value="5' to 3' exonuclease, C-terminal subdomain"/>
    <property type="match status" value="1"/>
</dbReference>
<dbReference type="Gene3D" id="3.40.1440.10">
    <property type="entry name" value="GIY-YIG endonuclease"/>
    <property type="match status" value="1"/>
</dbReference>
<dbReference type="Gene3D" id="4.10.860.10">
    <property type="entry name" value="UVR domain"/>
    <property type="match status" value="1"/>
</dbReference>
<dbReference type="Gene3D" id="3.30.420.340">
    <property type="entry name" value="UvrC, RNAse H endonuclease domain"/>
    <property type="match status" value="1"/>
</dbReference>
<dbReference type="HAMAP" id="MF_00203">
    <property type="entry name" value="UvrC"/>
    <property type="match status" value="1"/>
</dbReference>
<dbReference type="InterPro" id="IPR000305">
    <property type="entry name" value="GIY-YIG_endonuc"/>
</dbReference>
<dbReference type="InterPro" id="IPR035901">
    <property type="entry name" value="GIY-YIG_endonuc_sf"/>
</dbReference>
<dbReference type="InterPro" id="IPR047296">
    <property type="entry name" value="GIY-YIG_UvrC_Cho"/>
</dbReference>
<dbReference type="InterPro" id="IPR003583">
    <property type="entry name" value="Hlx-hairpin-Hlx_DNA-bd_motif"/>
</dbReference>
<dbReference type="InterPro" id="IPR010994">
    <property type="entry name" value="RuvA_2-like"/>
</dbReference>
<dbReference type="InterPro" id="IPR001943">
    <property type="entry name" value="UVR_dom"/>
</dbReference>
<dbReference type="InterPro" id="IPR036876">
    <property type="entry name" value="UVR_dom_sf"/>
</dbReference>
<dbReference type="InterPro" id="IPR050066">
    <property type="entry name" value="UvrABC_protein_C"/>
</dbReference>
<dbReference type="InterPro" id="IPR004791">
    <property type="entry name" value="UvrC"/>
</dbReference>
<dbReference type="InterPro" id="IPR001162">
    <property type="entry name" value="UvrC_RNase_H_dom"/>
</dbReference>
<dbReference type="InterPro" id="IPR038476">
    <property type="entry name" value="UvrC_RNase_H_dom_sf"/>
</dbReference>
<dbReference type="NCBIfam" id="NF001824">
    <property type="entry name" value="PRK00558.1-5"/>
    <property type="match status" value="1"/>
</dbReference>
<dbReference type="NCBIfam" id="TIGR00194">
    <property type="entry name" value="uvrC"/>
    <property type="match status" value="1"/>
</dbReference>
<dbReference type="PANTHER" id="PTHR30562:SF1">
    <property type="entry name" value="UVRABC SYSTEM PROTEIN C"/>
    <property type="match status" value="1"/>
</dbReference>
<dbReference type="PANTHER" id="PTHR30562">
    <property type="entry name" value="UVRC/OXIDOREDUCTASE"/>
    <property type="match status" value="1"/>
</dbReference>
<dbReference type="Pfam" id="PF01541">
    <property type="entry name" value="GIY-YIG"/>
    <property type="match status" value="1"/>
</dbReference>
<dbReference type="Pfam" id="PF02151">
    <property type="entry name" value="UVR"/>
    <property type="match status" value="1"/>
</dbReference>
<dbReference type="Pfam" id="PF22920">
    <property type="entry name" value="UvrC_RNaseH"/>
    <property type="match status" value="1"/>
</dbReference>
<dbReference type="Pfam" id="PF08459">
    <property type="entry name" value="UvrC_RNaseH_dom"/>
    <property type="match status" value="1"/>
</dbReference>
<dbReference type="SMART" id="SM00465">
    <property type="entry name" value="GIYc"/>
    <property type="match status" value="1"/>
</dbReference>
<dbReference type="SMART" id="SM00278">
    <property type="entry name" value="HhH1"/>
    <property type="match status" value="2"/>
</dbReference>
<dbReference type="SUPFAM" id="SSF46600">
    <property type="entry name" value="C-terminal UvrC-binding domain of UvrB"/>
    <property type="match status" value="1"/>
</dbReference>
<dbReference type="SUPFAM" id="SSF82771">
    <property type="entry name" value="GIY-YIG endonuclease"/>
    <property type="match status" value="1"/>
</dbReference>
<dbReference type="SUPFAM" id="SSF47781">
    <property type="entry name" value="RuvA domain 2-like"/>
    <property type="match status" value="1"/>
</dbReference>
<dbReference type="PROSITE" id="PS50164">
    <property type="entry name" value="GIY_YIG"/>
    <property type="match status" value="1"/>
</dbReference>
<dbReference type="PROSITE" id="PS50151">
    <property type="entry name" value="UVR"/>
    <property type="match status" value="1"/>
</dbReference>
<dbReference type="PROSITE" id="PS50165">
    <property type="entry name" value="UVRC"/>
    <property type="match status" value="1"/>
</dbReference>
<protein>
    <recommendedName>
        <fullName evidence="1">UvrABC system protein C</fullName>
        <shortName evidence="1">Protein UvrC</shortName>
    </recommendedName>
    <alternativeName>
        <fullName evidence="1">Excinuclease ABC subunit C</fullName>
    </alternativeName>
</protein>